<keyword id="KW-0028">Amino-acid biosynthesis</keyword>
<keyword id="KW-0963">Cytoplasm</keyword>
<keyword id="KW-0220">Diaminopimelate biosynthesis</keyword>
<keyword id="KW-0456">Lyase</keyword>
<keyword id="KW-0457">Lysine biosynthesis</keyword>
<keyword id="KW-1185">Reference proteome</keyword>
<keyword id="KW-0704">Schiff base</keyword>
<name>DAPA_METMP</name>
<reference key="1">
    <citation type="journal article" date="2004" name="J. Bacteriol.">
        <title>Complete genome sequence of the genetically tractable hydrogenotrophic methanogen Methanococcus maripaludis.</title>
        <authorList>
            <person name="Hendrickson E.L."/>
            <person name="Kaul R."/>
            <person name="Zhou Y."/>
            <person name="Bovee D."/>
            <person name="Chapman P."/>
            <person name="Chung J."/>
            <person name="Conway de Macario E."/>
            <person name="Dodsworth J.A."/>
            <person name="Gillett W."/>
            <person name="Graham D.E."/>
            <person name="Hackett M."/>
            <person name="Haydock A.K."/>
            <person name="Kang A."/>
            <person name="Land M.L."/>
            <person name="Levy R."/>
            <person name="Lie T.J."/>
            <person name="Major T.A."/>
            <person name="Moore B.C."/>
            <person name="Porat I."/>
            <person name="Palmeiri A."/>
            <person name="Rouse G."/>
            <person name="Saenphimmachak C."/>
            <person name="Soell D."/>
            <person name="Van Dien S."/>
            <person name="Wang T."/>
            <person name="Whitman W.B."/>
            <person name="Xia Q."/>
            <person name="Zhang Y."/>
            <person name="Larimer F.W."/>
            <person name="Olson M.V."/>
            <person name="Leigh J.A."/>
        </authorList>
    </citation>
    <scope>NUCLEOTIDE SEQUENCE [LARGE SCALE GENOMIC DNA]</scope>
    <source>
        <strain>DSM 14266 / JCM 13030 / NBRC 101832 / S2 / LL</strain>
    </source>
</reference>
<protein>
    <recommendedName>
        <fullName evidence="1">4-hydroxy-tetrahydrodipicolinate synthase</fullName>
        <shortName evidence="1">HTPA synthase</shortName>
        <ecNumber evidence="1">4.3.3.7</ecNumber>
    </recommendedName>
</protein>
<organism>
    <name type="scientific">Methanococcus maripaludis (strain DSM 14266 / JCM 13030 / NBRC 101832 / S2 / LL)</name>
    <dbReference type="NCBI Taxonomy" id="267377"/>
    <lineage>
        <taxon>Archaea</taxon>
        <taxon>Methanobacteriati</taxon>
        <taxon>Methanobacteriota</taxon>
        <taxon>Methanomada group</taxon>
        <taxon>Methanococci</taxon>
        <taxon>Methanococcales</taxon>
        <taxon>Methanococcaceae</taxon>
        <taxon>Methanococcus</taxon>
    </lineage>
</organism>
<sequence>MQGVYPAIITPLKENKVDYDGLRNNIDFLIENGVSGVIPVGTTGESPTLTPLEHEKVVEKVVEFVDGRVEVIAGTGSNSTSEALEFSQYAEDVGVDGVLLITPYYNKPTQEGLKRHFGEIANSINVPIVLYNVPSRTALNIEPETIKYLFNEYSNISAVKEANPNLSQVSEVLDSCDIDILSGNDELTLPIISLGGKGVVSVIANIAPKEFVQMVDFANAGKFDKAKEIHYKLFPLMKLMFVETNPIPIKTAMNMLGMPSGELRLPLCEMAESNKLKLQNALNNLGLLK</sequence>
<accession>Q6LZP8</accession>
<feature type="chain" id="PRO_0000103200" description="4-hydroxy-tetrahydrodipicolinate synthase">
    <location>
        <begin position="1"/>
        <end position="289"/>
    </location>
</feature>
<feature type="active site" description="Proton donor/acceptor" evidence="1">
    <location>
        <position position="131"/>
    </location>
</feature>
<feature type="active site" description="Schiff-base intermediate with substrate" evidence="1">
    <location>
        <position position="160"/>
    </location>
</feature>
<feature type="binding site" evidence="1">
    <location>
        <position position="43"/>
    </location>
    <ligand>
        <name>pyruvate</name>
        <dbReference type="ChEBI" id="CHEBI:15361"/>
    </ligand>
</feature>
<feature type="binding site" evidence="1">
    <location>
        <position position="200"/>
    </location>
    <ligand>
        <name>pyruvate</name>
        <dbReference type="ChEBI" id="CHEBI:15361"/>
    </ligand>
</feature>
<feature type="site" description="Part of a proton relay during catalysis" evidence="1">
    <location>
        <position position="42"/>
    </location>
</feature>
<feature type="site" description="Part of a proton relay during catalysis" evidence="1">
    <location>
        <position position="105"/>
    </location>
</feature>
<comment type="function">
    <text evidence="1">Catalyzes the condensation of (S)-aspartate-beta-semialdehyde [(S)-ASA] and pyruvate to 4-hydroxy-tetrahydrodipicolinate (HTPA).</text>
</comment>
<comment type="catalytic activity">
    <reaction evidence="1">
        <text>L-aspartate 4-semialdehyde + pyruvate = (2S,4S)-4-hydroxy-2,3,4,5-tetrahydrodipicolinate + H2O + H(+)</text>
        <dbReference type="Rhea" id="RHEA:34171"/>
        <dbReference type="ChEBI" id="CHEBI:15361"/>
        <dbReference type="ChEBI" id="CHEBI:15377"/>
        <dbReference type="ChEBI" id="CHEBI:15378"/>
        <dbReference type="ChEBI" id="CHEBI:67139"/>
        <dbReference type="ChEBI" id="CHEBI:537519"/>
        <dbReference type="EC" id="4.3.3.7"/>
    </reaction>
</comment>
<comment type="pathway">
    <text evidence="1">Amino-acid biosynthesis; L-lysine biosynthesis via DAP pathway; (S)-tetrahydrodipicolinate from L-aspartate: step 3/4.</text>
</comment>
<comment type="subunit">
    <text evidence="1">Homotetramer; dimer of dimers.</text>
</comment>
<comment type="subcellular location">
    <subcellularLocation>
        <location evidence="1">Cytoplasm</location>
    </subcellularLocation>
</comment>
<comment type="similarity">
    <text evidence="1">Belongs to the DapA family.</text>
</comment>
<comment type="caution">
    <text evidence="2">Was originally thought to be a dihydrodipicolinate synthase (DHDPS), catalyzing the condensation of (S)-aspartate-beta-semialdehyde [(S)-ASA] and pyruvate to dihydrodipicolinate (DHDP). However, it was shown in E.coli that the product of the enzymatic reaction is not dihydrodipicolinate but in fact (4S)-4-hydroxy-2,3,4,5-tetrahydro-(2S)-dipicolinic acid (HTPA), and that the consecutive dehydration reaction leading to DHDP is not spontaneous but catalyzed by DapB.</text>
</comment>
<evidence type="ECO:0000255" key="1">
    <source>
        <dbReference type="HAMAP-Rule" id="MF_00418"/>
    </source>
</evidence>
<evidence type="ECO:0000305" key="2"/>
<dbReference type="EC" id="4.3.3.7" evidence="1"/>
<dbReference type="EMBL" id="BX950229">
    <property type="protein sequence ID" value="CAF30132.1"/>
    <property type="molecule type" value="Genomic_DNA"/>
</dbReference>
<dbReference type="RefSeq" id="WP_011170520.1">
    <property type="nucleotide sequence ID" value="NC_005791.1"/>
</dbReference>
<dbReference type="SMR" id="Q6LZP8"/>
<dbReference type="STRING" id="267377.MMP0576"/>
<dbReference type="EnsemblBacteria" id="CAF30132">
    <property type="protein sequence ID" value="CAF30132"/>
    <property type="gene ID" value="MMP0576"/>
</dbReference>
<dbReference type="GeneID" id="2761834"/>
<dbReference type="KEGG" id="mmp:MMP0576"/>
<dbReference type="PATRIC" id="fig|267377.15.peg.589"/>
<dbReference type="eggNOG" id="arCOG04172">
    <property type="taxonomic scope" value="Archaea"/>
</dbReference>
<dbReference type="HOGENOM" id="CLU_049343_7_1_2"/>
<dbReference type="OrthoDB" id="33636at2157"/>
<dbReference type="UniPathway" id="UPA00034">
    <property type="reaction ID" value="UER00017"/>
</dbReference>
<dbReference type="Proteomes" id="UP000000590">
    <property type="component" value="Chromosome"/>
</dbReference>
<dbReference type="GO" id="GO:0005737">
    <property type="term" value="C:cytoplasm"/>
    <property type="evidence" value="ECO:0007669"/>
    <property type="project" value="UniProtKB-SubCell"/>
</dbReference>
<dbReference type="GO" id="GO:0008675">
    <property type="term" value="F:2-dehydro-3-deoxy-phosphogluconate aldolase activity"/>
    <property type="evidence" value="ECO:0007669"/>
    <property type="project" value="UniProtKB-ARBA"/>
</dbReference>
<dbReference type="GO" id="GO:0008840">
    <property type="term" value="F:4-hydroxy-tetrahydrodipicolinate synthase activity"/>
    <property type="evidence" value="ECO:0007669"/>
    <property type="project" value="UniProtKB-UniRule"/>
</dbReference>
<dbReference type="GO" id="GO:0019877">
    <property type="term" value="P:diaminopimelate biosynthetic process"/>
    <property type="evidence" value="ECO:0007669"/>
    <property type="project" value="UniProtKB-UniRule"/>
</dbReference>
<dbReference type="GO" id="GO:0009089">
    <property type="term" value="P:lysine biosynthetic process via diaminopimelate"/>
    <property type="evidence" value="ECO:0007669"/>
    <property type="project" value="UniProtKB-UniRule"/>
</dbReference>
<dbReference type="CDD" id="cd00950">
    <property type="entry name" value="DHDPS"/>
    <property type="match status" value="1"/>
</dbReference>
<dbReference type="Gene3D" id="3.20.20.70">
    <property type="entry name" value="Aldolase class I"/>
    <property type="match status" value="1"/>
</dbReference>
<dbReference type="HAMAP" id="MF_00418">
    <property type="entry name" value="DapA"/>
    <property type="match status" value="1"/>
</dbReference>
<dbReference type="InterPro" id="IPR013785">
    <property type="entry name" value="Aldolase_TIM"/>
</dbReference>
<dbReference type="InterPro" id="IPR005263">
    <property type="entry name" value="DapA"/>
</dbReference>
<dbReference type="InterPro" id="IPR002220">
    <property type="entry name" value="DapA-like"/>
</dbReference>
<dbReference type="InterPro" id="IPR020625">
    <property type="entry name" value="Schiff_base-form_aldolases_AS"/>
</dbReference>
<dbReference type="InterPro" id="IPR020624">
    <property type="entry name" value="Schiff_base-form_aldolases_CS"/>
</dbReference>
<dbReference type="NCBIfam" id="TIGR00674">
    <property type="entry name" value="dapA"/>
    <property type="match status" value="1"/>
</dbReference>
<dbReference type="PANTHER" id="PTHR12128:SF66">
    <property type="entry name" value="4-HYDROXY-2-OXOGLUTARATE ALDOLASE, MITOCHONDRIAL"/>
    <property type="match status" value="1"/>
</dbReference>
<dbReference type="PANTHER" id="PTHR12128">
    <property type="entry name" value="DIHYDRODIPICOLINATE SYNTHASE"/>
    <property type="match status" value="1"/>
</dbReference>
<dbReference type="Pfam" id="PF00701">
    <property type="entry name" value="DHDPS"/>
    <property type="match status" value="1"/>
</dbReference>
<dbReference type="PIRSF" id="PIRSF001365">
    <property type="entry name" value="DHDPS"/>
    <property type="match status" value="1"/>
</dbReference>
<dbReference type="PRINTS" id="PR00146">
    <property type="entry name" value="DHPICSNTHASE"/>
</dbReference>
<dbReference type="SMART" id="SM01130">
    <property type="entry name" value="DHDPS"/>
    <property type="match status" value="1"/>
</dbReference>
<dbReference type="SUPFAM" id="SSF51569">
    <property type="entry name" value="Aldolase"/>
    <property type="match status" value="1"/>
</dbReference>
<dbReference type="PROSITE" id="PS00665">
    <property type="entry name" value="DHDPS_1"/>
    <property type="match status" value="1"/>
</dbReference>
<dbReference type="PROSITE" id="PS00666">
    <property type="entry name" value="DHDPS_2"/>
    <property type="match status" value="1"/>
</dbReference>
<proteinExistence type="inferred from homology"/>
<gene>
    <name evidence="1" type="primary">dapA</name>
    <name type="ordered locus">MMP0576</name>
</gene>